<organismHost>
    <name type="scientific">Acidianus convivator</name>
    <dbReference type="NCBI Taxonomy" id="269667"/>
</organismHost>
<proteinExistence type="predicted"/>
<sequence>MQSAESGLLILPPNLMQRRVLKIKRILSYSRDTKVSHKVVLAYFRKHYWLIANGFCPYCHNHYRTFGILANHIMRSHTLEVAEDYFKLREKIKERGRK</sequence>
<organism>
    <name type="scientific">Acidianus two-tailed virus</name>
    <name type="common">ATV</name>
    <dbReference type="NCBI Taxonomy" id="315953"/>
    <lineage>
        <taxon>Viruses</taxon>
        <taxon>Viruses incertae sedis</taxon>
        <taxon>Bicaudaviridae</taxon>
        <taxon>Bicaudavirus</taxon>
    </lineage>
</organism>
<feature type="chain" id="PRO_0000389036" description="Putative zinc finger protein ORF98b">
    <location>
        <begin position="1"/>
        <end position="98"/>
    </location>
</feature>
<feature type="zinc finger region" description="C2H2-type">
    <location>
        <begin position="54"/>
        <end position="77"/>
    </location>
</feature>
<protein>
    <recommendedName>
        <fullName>Putative zinc finger protein ORF98b</fullName>
    </recommendedName>
</protein>
<reference key="1">
    <citation type="journal article" date="2005" name="Nature">
        <title>Virology: independent virus development outside a host.</title>
        <authorList>
            <person name="Haring M."/>
            <person name="Vestergaard G."/>
            <person name="Rachel R."/>
            <person name="Chen L."/>
            <person name="Garrett R.A."/>
            <person name="Prangishvili D."/>
        </authorList>
    </citation>
    <scope>NUCLEOTIDE SEQUENCE [GENOMIC DNA]</scope>
</reference>
<name>Y098B_ATV</name>
<accession>Q3V4V2</accession>
<dbReference type="EMBL" id="AJ888457">
    <property type="protein sequence ID" value="CAI59862.1"/>
    <property type="molecule type" value="Genomic_DNA"/>
</dbReference>
<dbReference type="RefSeq" id="YP_319867.1">
    <property type="nucleotide sequence ID" value="NC_007409.1"/>
</dbReference>
<dbReference type="GeneID" id="4484237"/>
<dbReference type="KEGG" id="vg:4484237"/>
<dbReference type="Proteomes" id="UP000002150">
    <property type="component" value="Genome"/>
</dbReference>
<dbReference type="GO" id="GO:0008270">
    <property type="term" value="F:zinc ion binding"/>
    <property type="evidence" value="ECO:0007669"/>
    <property type="project" value="UniProtKB-KW"/>
</dbReference>
<dbReference type="InterPro" id="IPR013087">
    <property type="entry name" value="Znf_C2H2_type"/>
</dbReference>
<dbReference type="PROSITE" id="PS00028">
    <property type="entry name" value="ZINC_FINGER_C2H2_1"/>
    <property type="match status" value="1"/>
</dbReference>
<keyword id="KW-0479">Metal-binding</keyword>
<keyword id="KW-1185">Reference proteome</keyword>
<keyword id="KW-0862">Zinc</keyword>
<keyword id="KW-0863">Zinc-finger</keyword>